<dbReference type="EC" id="7.1.1.-" evidence="1"/>
<dbReference type="EMBL" id="CP000548">
    <property type="protein sequence ID" value="ABO04732.1"/>
    <property type="molecule type" value="Genomic_DNA"/>
</dbReference>
<dbReference type="RefSeq" id="WP_004186558.1">
    <property type="nucleotide sequence ID" value="NZ_CP007802.1"/>
</dbReference>
<dbReference type="SMR" id="A3MIA9"/>
<dbReference type="GeneID" id="93059702"/>
<dbReference type="KEGG" id="bmaz:BM44_2590"/>
<dbReference type="KEGG" id="bmn:BMA10247_0421"/>
<dbReference type="PATRIC" id="fig|320389.8.peg.2924"/>
<dbReference type="GO" id="GO:0005886">
    <property type="term" value="C:plasma membrane"/>
    <property type="evidence" value="ECO:0007669"/>
    <property type="project" value="UniProtKB-SubCell"/>
</dbReference>
<dbReference type="GO" id="GO:0051539">
    <property type="term" value="F:4 iron, 4 sulfur cluster binding"/>
    <property type="evidence" value="ECO:0007669"/>
    <property type="project" value="UniProtKB-KW"/>
</dbReference>
<dbReference type="GO" id="GO:0005506">
    <property type="term" value="F:iron ion binding"/>
    <property type="evidence" value="ECO:0007669"/>
    <property type="project" value="UniProtKB-UniRule"/>
</dbReference>
<dbReference type="GO" id="GO:0050136">
    <property type="term" value="F:NADH:ubiquinone reductase (non-electrogenic) activity"/>
    <property type="evidence" value="ECO:0007669"/>
    <property type="project" value="UniProtKB-UniRule"/>
</dbReference>
<dbReference type="GO" id="GO:0048038">
    <property type="term" value="F:quinone binding"/>
    <property type="evidence" value="ECO:0007669"/>
    <property type="project" value="UniProtKB-KW"/>
</dbReference>
<dbReference type="GO" id="GO:0009060">
    <property type="term" value="P:aerobic respiration"/>
    <property type="evidence" value="ECO:0007669"/>
    <property type="project" value="TreeGrafter"/>
</dbReference>
<dbReference type="FunFam" id="3.30.70.3270:FF:000003">
    <property type="entry name" value="NADH-quinone oxidoreductase subunit I"/>
    <property type="match status" value="1"/>
</dbReference>
<dbReference type="Gene3D" id="3.30.70.3270">
    <property type="match status" value="1"/>
</dbReference>
<dbReference type="HAMAP" id="MF_01351">
    <property type="entry name" value="NDH1_NuoI"/>
    <property type="match status" value="1"/>
</dbReference>
<dbReference type="InterPro" id="IPR017896">
    <property type="entry name" value="4Fe4S_Fe-S-bd"/>
</dbReference>
<dbReference type="InterPro" id="IPR017900">
    <property type="entry name" value="4Fe4S_Fe_S_CS"/>
</dbReference>
<dbReference type="InterPro" id="IPR010226">
    <property type="entry name" value="NADH_quinone_OxRdtase_chainI"/>
</dbReference>
<dbReference type="NCBIfam" id="TIGR01971">
    <property type="entry name" value="NuoI"/>
    <property type="match status" value="1"/>
</dbReference>
<dbReference type="NCBIfam" id="NF004538">
    <property type="entry name" value="PRK05888.1-4"/>
    <property type="match status" value="1"/>
</dbReference>
<dbReference type="NCBIfam" id="NF004539">
    <property type="entry name" value="PRK05888.1-5"/>
    <property type="match status" value="1"/>
</dbReference>
<dbReference type="PANTHER" id="PTHR10849:SF20">
    <property type="entry name" value="NADH DEHYDROGENASE [UBIQUINONE] IRON-SULFUR PROTEIN 8, MITOCHONDRIAL"/>
    <property type="match status" value="1"/>
</dbReference>
<dbReference type="PANTHER" id="PTHR10849">
    <property type="entry name" value="NADH DEHYDROGENASE UBIQUINONE IRON-SULFUR PROTEIN 8, MITOCHONDRIAL"/>
    <property type="match status" value="1"/>
</dbReference>
<dbReference type="Pfam" id="PF12838">
    <property type="entry name" value="Fer4_7"/>
    <property type="match status" value="1"/>
</dbReference>
<dbReference type="SUPFAM" id="SSF54862">
    <property type="entry name" value="4Fe-4S ferredoxins"/>
    <property type="match status" value="1"/>
</dbReference>
<dbReference type="PROSITE" id="PS00198">
    <property type="entry name" value="4FE4S_FER_1"/>
    <property type="match status" value="2"/>
</dbReference>
<dbReference type="PROSITE" id="PS51379">
    <property type="entry name" value="4FE4S_FER_2"/>
    <property type="match status" value="2"/>
</dbReference>
<gene>
    <name evidence="1" type="primary">nuoI</name>
    <name type="ordered locus">BMA10247_0421</name>
</gene>
<keyword id="KW-0004">4Fe-4S</keyword>
<keyword id="KW-0997">Cell inner membrane</keyword>
<keyword id="KW-1003">Cell membrane</keyword>
<keyword id="KW-0408">Iron</keyword>
<keyword id="KW-0411">Iron-sulfur</keyword>
<keyword id="KW-0472">Membrane</keyword>
<keyword id="KW-0479">Metal-binding</keyword>
<keyword id="KW-0520">NAD</keyword>
<keyword id="KW-0874">Quinone</keyword>
<keyword id="KW-0677">Repeat</keyword>
<keyword id="KW-1278">Translocase</keyword>
<keyword id="KW-0830">Ubiquinone</keyword>
<organism>
    <name type="scientific">Burkholderia mallei (strain NCTC 10247)</name>
    <dbReference type="NCBI Taxonomy" id="320389"/>
    <lineage>
        <taxon>Bacteria</taxon>
        <taxon>Pseudomonadati</taxon>
        <taxon>Pseudomonadota</taxon>
        <taxon>Betaproteobacteria</taxon>
        <taxon>Burkholderiales</taxon>
        <taxon>Burkholderiaceae</taxon>
        <taxon>Burkholderia</taxon>
        <taxon>pseudomallei group</taxon>
    </lineage>
</organism>
<sequence length="162" mass="18706">MTAIQQFFKTFFLTELLKGLALTGRYTFKRKFTVQFPEEKTPISPRFRGLHALRRYENGEERCIACKLCEAVCPALAITIESETRADNTRRTTRYDIDLTKCIFCGFCEESCPVDSIVETQILEYHGEKRGDLYFTKDMLLAVGDRYEKEIAAAKAADARYR</sequence>
<reference key="1">
    <citation type="journal article" date="2010" name="Genome Biol. Evol.">
        <title>Continuing evolution of Burkholderia mallei through genome reduction and large-scale rearrangements.</title>
        <authorList>
            <person name="Losada L."/>
            <person name="Ronning C.M."/>
            <person name="DeShazer D."/>
            <person name="Woods D."/>
            <person name="Fedorova N."/>
            <person name="Kim H.S."/>
            <person name="Shabalina S.A."/>
            <person name="Pearson T.R."/>
            <person name="Brinkac L."/>
            <person name="Tan P."/>
            <person name="Nandi T."/>
            <person name="Crabtree J."/>
            <person name="Badger J."/>
            <person name="Beckstrom-Sternberg S."/>
            <person name="Saqib M."/>
            <person name="Schutzer S.E."/>
            <person name="Keim P."/>
            <person name="Nierman W.C."/>
        </authorList>
    </citation>
    <scope>NUCLEOTIDE SEQUENCE [LARGE SCALE GENOMIC DNA]</scope>
    <source>
        <strain>NCTC 10247</strain>
    </source>
</reference>
<evidence type="ECO:0000255" key="1">
    <source>
        <dbReference type="HAMAP-Rule" id="MF_01351"/>
    </source>
</evidence>
<protein>
    <recommendedName>
        <fullName evidence="1">NADH-quinone oxidoreductase subunit I</fullName>
        <ecNumber evidence="1">7.1.1.-</ecNumber>
    </recommendedName>
    <alternativeName>
        <fullName evidence="1">NADH dehydrogenase I subunit I</fullName>
    </alternativeName>
    <alternativeName>
        <fullName evidence="1">NDH-1 subunit I</fullName>
    </alternativeName>
</protein>
<name>NUOI_BURM7</name>
<comment type="function">
    <text evidence="1">NDH-1 shuttles electrons from NADH, via FMN and iron-sulfur (Fe-S) centers, to quinones in the respiratory chain. The immediate electron acceptor for the enzyme in this species is believed to be ubiquinone. Couples the redox reaction to proton translocation (for every two electrons transferred, four hydrogen ions are translocated across the cytoplasmic membrane), and thus conserves the redox energy in a proton gradient.</text>
</comment>
<comment type="catalytic activity">
    <reaction evidence="1">
        <text>a quinone + NADH + 5 H(+)(in) = a quinol + NAD(+) + 4 H(+)(out)</text>
        <dbReference type="Rhea" id="RHEA:57888"/>
        <dbReference type="ChEBI" id="CHEBI:15378"/>
        <dbReference type="ChEBI" id="CHEBI:24646"/>
        <dbReference type="ChEBI" id="CHEBI:57540"/>
        <dbReference type="ChEBI" id="CHEBI:57945"/>
        <dbReference type="ChEBI" id="CHEBI:132124"/>
    </reaction>
</comment>
<comment type="cofactor">
    <cofactor evidence="1">
        <name>[4Fe-4S] cluster</name>
        <dbReference type="ChEBI" id="CHEBI:49883"/>
    </cofactor>
    <text evidence="1">Binds 2 [4Fe-4S] clusters per subunit.</text>
</comment>
<comment type="subunit">
    <text evidence="1">NDH-1 is composed of 14 different subunits. Subunits NuoA, H, J, K, L, M, N constitute the membrane sector of the complex.</text>
</comment>
<comment type="subcellular location">
    <subcellularLocation>
        <location evidence="1">Cell inner membrane</location>
        <topology evidence="1">Peripheral membrane protein</topology>
    </subcellularLocation>
</comment>
<comment type="similarity">
    <text evidence="1">Belongs to the complex I 23 kDa subunit family.</text>
</comment>
<proteinExistence type="inferred from homology"/>
<accession>A3MIA9</accession>
<feature type="chain" id="PRO_1000067762" description="NADH-quinone oxidoreductase subunit I">
    <location>
        <begin position="1"/>
        <end position="162"/>
    </location>
</feature>
<feature type="domain" description="4Fe-4S ferredoxin-type 1" evidence="1">
    <location>
        <begin position="54"/>
        <end position="83"/>
    </location>
</feature>
<feature type="domain" description="4Fe-4S ferredoxin-type 2" evidence="1">
    <location>
        <begin position="93"/>
        <end position="122"/>
    </location>
</feature>
<feature type="binding site" evidence="1">
    <location>
        <position position="63"/>
    </location>
    <ligand>
        <name>[4Fe-4S] cluster</name>
        <dbReference type="ChEBI" id="CHEBI:49883"/>
        <label>1</label>
    </ligand>
</feature>
<feature type="binding site" evidence="1">
    <location>
        <position position="66"/>
    </location>
    <ligand>
        <name>[4Fe-4S] cluster</name>
        <dbReference type="ChEBI" id="CHEBI:49883"/>
        <label>1</label>
    </ligand>
</feature>
<feature type="binding site" evidence="1">
    <location>
        <position position="69"/>
    </location>
    <ligand>
        <name>[4Fe-4S] cluster</name>
        <dbReference type="ChEBI" id="CHEBI:49883"/>
        <label>1</label>
    </ligand>
</feature>
<feature type="binding site" evidence="1">
    <location>
        <position position="73"/>
    </location>
    <ligand>
        <name>[4Fe-4S] cluster</name>
        <dbReference type="ChEBI" id="CHEBI:49883"/>
        <label>2</label>
    </ligand>
</feature>
<feature type="binding site" evidence="1">
    <location>
        <position position="102"/>
    </location>
    <ligand>
        <name>[4Fe-4S] cluster</name>
        <dbReference type="ChEBI" id="CHEBI:49883"/>
        <label>2</label>
    </ligand>
</feature>
<feature type="binding site" evidence="1">
    <location>
        <position position="105"/>
    </location>
    <ligand>
        <name>[4Fe-4S] cluster</name>
        <dbReference type="ChEBI" id="CHEBI:49883"/>
        <label>2</label>
    </ligand>
</feature>
<feature type="binding site" evidence="1">
    <location>
        <position position="108"/>
    </location>
    <ligand>
        <name>[4Fe-4S] cluster</name>
        <dbReference type="ChEBI" id="CHEBI:49883"/>
        <label>2</label>
    </ligand>
</feature>
<feature type="binding site" evidence="1">
    <location>
        <position position="112"/>
    </location>
    <ligand>
        <name>[4Fe-4S] cluster</name>
        <dbReference type="ChEBI" id="CHEBI:49883"/>
        <label>1</label>
    </ligand>
</feature>